<reference key="1">
    <citation type="submission" date="1996-11" db="EMBL/GenBank/DDBJ databases">
        <title>Gene sequence for auracyanin B from Chloroflexus aurantiacus.</title>
        <authorList>
            <person name="Lopez J.C."/>
            <person name="Dracheva S."/>
            <person name="Blankenship R.E."/>
        </authorList>
    </citation>
    <scope>NUCLEOTIDE SEQUENCE [GENOMIC DNA]</scope>
</reference>
<reference key="2">
    <citation type="journal article" date="2011" name="BMC Genomics">
        <title>Complete genome sequence of the filamentous anoxygenic phototrophic bacterium Chloroflexus aurantiacus.</title>
        <authorList>
            <person name="Tang K.H."/>
            <person name="Barry K."/>
            <person name="Chertkov O."/>
            <person name="Dalin E."/>
            <person name="Han C.S."/>
            <person name="Hauser L.J."/>
            <person name="Honchak B.M."/>
            <person name="Karbach L.E."/>
            <person name="Land M.L."/>
            <person name="Lapidus A."/>
            <person name="Larimer F.W."/>
            <person name="Mikhailova N."/>
            <person name="Pitluck S."/>
            <person name="Pierson B.K."/>
            <person name="Blankenship R.E."/>
        </authorList>
    </citation>
    <scope>NUCLEOTIDE SEQUENCE [LARGE SCALE GENOMIC DNA]</scope>
    <source>
        <strain>ATCC 29366 / DSM 635 / J-10-fl</strain>
    </source>
</reference>
<reference key="3">
    <citation type="journal article" date="1992" name="J. Biol. Chem.">
        <title>Isolation, characterization, and amino acid sequences of auracyanins, blue copper proteins from the green photosynthetic bacterium Chloroflexus aurantiacus.</title>
        <authorList>
            <person name="McManus J.D."/>
            <person name="Brune D.C."/>
            <person name="Han J."/>
            <person name="Sanders-Loehr J."/>
            <person name="Meyer T.E."/>
            <person name="Cusanovich M.A."/>
            <person name="Tollin G."/>
            <person name="Blankenship R.E."/>
        </authorList>
    </citation>
    <scope>PROTEIN SEQUENCE OF 81-235</scope>
    <scope>FUNCTION</scope>
    <scope>COPPER BINDING</scope>
    <scope>SUBCELLULAR LOCATION</scope>
    <scope>GLYCOSYLATION</scope>
</reference>
<reference key="4">
    <citation type="journal article" date="2003" name="J. Biol. Inorg. Chem.">
        <title>A thin-film electrochemical study of the 'blue' copper proteins, auracyanin A and auracyanin B, from the photosynthetic bacterium Chloroflexus aurantiacus: the reduction potential as a function of pH.</title>
        <authorList>
            <person name="Rooney M.B."/>
            <person name="Honeychurch M.J."/>
            <person name="Selvaraj F.M."/>
            <person name="Blankenship R.E."/>
            <person name="Bond A.M."/>
            <person name="Freeman H.C."/>
        </authorList>
    </citation>
    <scope>BIOPHYSICOCHEMICAL PROPERTIES</scope>
</reference>
<reference key="5">
    <citation type="journal article" date="2009" name="J. Biol. Inorg. Chem.">
        <title>The crystal structure of auracyanin A at 1.85 A resolution: the structures and functions of auracyanins A and B, two almost identical 'blue' copper proteins, in the photosynthetic bacterium Chloroflexus aurantiacus.</title>
        <authorList>
            <person name="Lee M."/>
            <person name="del Rosario M.C."/>
            <person name="Harris H.H."/>
            <person name="Blankenship R.E."/>
            <person name="Guss J.M."/>
            <person name="Freeman H.C."/>
        </authorList>
    </citation>
    <scope>INDUCTION</scope>
    <source>
        <strain>ATCC 29366 / DSM 635 / J-10-fl</strain>
    </source>
</reference>
<reference key="6">
    <citation type="journal article" date="2012" name="Photosyn. Res.">
        <title>Comparison of Chloroflexus aurantiacus strain J-10-fl proteomes of cells grown chemoheterotrophically and photoheterotrophically.</title>
        <authorList>
            <person name="Cao L."/>
            <person name="Bryant D.A."/>
            <person name="Schepmoes A.A."/>
            <person name="Vogl K."/>
            <person name="Smith R.D."/>
            <person name="Lipton M.S."/>
            <person name="Callister S.J."/>
        </authorList>
    </citation>
    <scope>INDUCTION</scope>
    <scope>IDENTIFICATION BY MASS SPECTROMETRY</scope>
</reference>
<reference key="7">
    <citation type="journal article" date="2013" name="Biochim. Biophys. Acta">
        <title>Alternative Complex III from phototrophic bacteria and its electron acceptor auracyanin.</title>
        <authorList>
            <person name="Majumder E.L."/>
            <person name="King J.D."/>
            <person name="Blankenship R.E."/>
        </authorList>
    </citation>
    <scope>REVIEW</scope>
</reference>
<reference key="8">
    <citation type="journal article" date="2001" name="J. Mol. Biol.">
        <title>Crystal structure of auracyanin, a 'blue' copper protein from the green thermophilic photosynthetic bacterium Chloroflexus aurantiacus.</title>
        <authorList>
            <person name="Bond C.S."/>
            <person name="Blankenship R.E."/>
            <person name="Freeman H.C."/>
            <person name="Guss J.M."/>
            <person name="Maher M.J."/>
            <person name="Selvaraj F.M."/>
            <person name="Wilce M.C.J."/>
            <person name="Willingham K.M."/>
        </authorList>
    </citation>
    <scope>X-RAY CRYSTALLOGRAPHY (1.55 ANGSTROMS) OF 81-235</scope>
</reference>
<protein>
    <recommendedName>
        <fullName>Auracyanin-B</fullName>
        <shortName>Ac-B</shortName>
    </recommendedName>
    <component>
        <recommendedName>
            <fullName>Auracyanin-B-1</fullName>
        </recommendedName>
    </component>
    <component>
        <recommendedName>
            <fullName>Auracyanin-B-2</fullName>
        </recommendedName>
    </component>
</protein>
<evidence type="ECO:0000255" key="1"/>
<evidence type="ECO:0000256" key="2">
    <source>
        <dbReference type="SAM" id="MobiDB-lite"/>
    </source>
</evidence>
<evidence type="ECO:0000269" key="3">
    <source>
    </source>
</evidence>
<evidence type="ECO:0000269" key="4">
    <source>
    </source>
</evidence>
<evidence type="ECO:0000269" key="5">
    <source>
    </source>
</evidence>
<evidence type="ECO:0000269" key="6">
    <source>
    </source>
</evidence>
<evidence type="ECO:0000269" key="7">
    <source>
    </source>
</evidence>
<evidence type="ECO:0000305" key="8"/>
<evidence type="ECO:0000305" key="9">
    <source>
    </source>
</evidence>
<evidence type="ECO:0007829" key="10">
    <source>
        <dbReference type="PDB" id="1QHQ"/>
    </source>
</evidence>
<keyword id="KW-0002">3D-structure</keyword>
<keyword id="KW-1003">Cell membrane</keyword>
<keyword id="KW-0186">Copper</keyword>
<keyword id="KW-0903">Direct protein sequencing</keyword>
<keyword id="KW-0249">Electron transport</keyword>
<keyword id="KW-0325">Glycoprotein</keyword>
<keyword id="KW-0472">Membrane</keyword>
<keyword id="KW-0479">Metal-binding</keyword>
<keyword id="KW-1185">Reference proteome</keyword>
<keyword id="KW-0732">Signal</keyword>
<keyword id="KW-0813">Transport</keyword>
<name>AURB_CHLAA</name>
<proteinExistence type="evidence at protein level"/>
<sequence length="235" mass="23716">MSWRGSGRSNFRSRSSSNGGSTFSGGSAGGPPLIVMMGLAFGAGLIMLIVMIASNATAGGFVAATPRPTATPRPTAAPAPTQPPAAQPTTAPATQAANAPGGSNVVNETPAQTVEVRAAPDALAFAQTSLSLPANTVVRLDFVNQNNLGVQHNWVLVNGGDDVAAAVNTAAQNNADALFVPPPDTPNALAWTAMLNAGESGSVTFRTPAPGTYLYICTFPGHYLAGMKGTLTVTP</sequence>
<accession>P27197</accession>
<accession>A9WE06</accession>
<accession>P94610</accession>
<dbReference type="EMBL" id="U78046">
    <property type="protein sequence ID" value="AAB38318.1"/>
    <property type="molecule type" value="Genomic_DNA"/>
</dbReference>
<dbReference type="EMBL" id="CP000909">
    <property type="protein sequence ID" value="ABY35165.1"/>
    <property type="molecule type" value="Genomic_DNA"/>
</dbReference>
<dbReference type="RefSeq" id="WP_012257819.1">
    <property type="nucleotide sequence ID" value="NC_010175.1"/>
</dbReference>
<dbReference type="RefSeq" id="YP_001635554.1">
    <property type="nucleotide sequence ID" value="NC_010175.1"/>
</dbReference>
<dbReference type="PDB" id="1OV8">
    <property type="method" value="X-ray"/>
    <property type="resolution" value="1.90 A"/>
    <property type="chains" value="A/B/C/D=96-235"/>
</dbReference>
<dbReference type="PDB" id="1QHQ">
    <property type="method" value="X-ray"/>
    <property type="resolution" value="1.55 A"/>
    <property type="chains" value="A=96-235"/>
</dbReference>
<dbReference type="PDBsum" id="1OV8"/>
<dbReference type="PDBsum" id="1QHQ"/>
<dbReference type="SMR" id="P27197"/>
<dbReference type="STRING" id="324602.Caur_1950"/>
<dbReference type="EnsemblBacteria" id="ABY35165">
    <property type="protein sequence ID" value="ABY35165"/>
    <property type="gene ID" value="Caur_1950"/>
</dbReference>
<dbReference type="KEGG" id="cau:Caur_1950"/>
<dbReference type="PATRIC" id="fig|324602.8.peg.2219"/>
<dbReference type="eggNOG" id="COG3241">
    <property type="taxonomic scope" value="Bacteria"/>
</dbReference>
<dbReference type="HOGENOM" id="CLU_102862_0_0_0"/>
<dbReference type="InParanoid" id="P27197"/>
<dbReference type="EvolutionaryTrace" id="P27197"/>
<dbReference type="Proteomes" id="UP000002008">
    <property type="component" value="Chromosome"/>
</dbReference>
<dbReference type="GO" id="GO:0005886">
    <property type="term" value="C:plasma membrane"/>
    <property type="evidence" value="ECO:0000314"/>
    <property type="project" value="UniProtKB"/>
</dbReference>
<dbReference type="GO" id="GO:0005507">
    <property type="term" value="F:copper ion binding"/>
    <property type="evidence" value="ECO:0000314"/>
    <property type="project" value="UniProtKB"/>
</dbReference>
<dbReference type="GO" id="GO:0009055">
    <property type="term" value="F:electron transfer activity"/>
    <property type="evidence" value="ECO:0007669"/>
    <property type="project" value="InterPro"/>
</dbReference>
<dbReference type="GO" id="GO:0016491">
    <property type="term" value="F:oxidoreductase activity"/>
    <property type="evidence" value="ECO:0000314"/>
    <property type="project" value="UniProtKB"/>
</dbReference>
<dbReference type="GO" id="GO:0009767">
    <property type="term" value="P:photosynthetic electron transport chain"/>
    <property type="evidence" value="ECO:0000314"/>
    <property type="project" value="UniProtKB"/>
</dbReference>
<dbReference type="CDD" id="cd04233">
    <property type="entry name" value="Auracyanin"/>
    <property type="match status" value="1"/>
</dbReference>
<dbReference type="FunFam" id="2.60.40.420:FF:000159">
    <property type="entry name" value="Auracyanin-B"/>
    <property type="match status" value="1"/>
</dbReference>
<dbReference type="Gene3D" id="2.60.40.420">
    <property type="entry name" value="Cupredoxins - blue copper proteins"/>
    <property type="match status" value="1"/>
</dbReference>
<dbReference type="InterPro" id="IPR000923">
    <property type="entry name" value="BlueCu_1"/>
</dbReference>
<dbReference type="InterPro" id="IPR028871">
    <property type="entry name" value="BlueCu_1_BS"/>
</dbReference>
<dbReference type="InterPro" id="IPR050845">
    <property type="entry name" value="Cu-binding_ET"/>
</dbReference>
<dbReference type="InterPro" id="IPR033138">
    <property type="entry name" value="Cu_oxidase_CS"/>
</dbReference>
<dbReference type="InterPro" id="IPR008972">
    <property type="entry name" value="Cupredoxin"/>
</dbReference>
<dbReference type="PANTHER" id="PTHR38439">
    <property type="entry name" value="AURACYANIN-B"/>
    <property type="match status" value="1"/>
</dbReference>
<dbReference type="PANTHER" id="PTHR38439:SF2">
    <property type="entry name" value="OUTER MEMBRANE PROTEIN H.8"/>
    <property type="match status" value="1"/>
</dbReference>
<dbReference type="Pfam" id="PF00127">
    <property type="entry name" value="Copper-bind"/>
    <property type="match status" value="1"/>
</dbReference>
<dbReference type="SUPFAM" id="SSF49503">
    <property type="entry name" value="Cupredoxins"/>
    <property type="match status" value="1"/>
</dbReference>
<dbReference type="PROSITE" id="PS00196">
    <property type="entry name" value="COPPER_BLUE"/>
    <property type="match status" value="1"/>
</dbReference>
<dbReference type="PROSITE" id="PS00079">
    <property type="entry name" value="MULTICOPPER_OXIDASE1"/>
    <property type="match status" value="1"/>
</dbReference>
<gene>
    <name type="ordered locus">Caur_1950</name>
</gene>
<organism>
    <name type="scientific">Chloroflexus aurantiacus (strain ATCC 29366 / DSM 635 / J-10-fl)</name>
    <dbReference type="NCBI Taxonomy" id="324602"/>
    <lineage>
        <taxon>Bacteria</taxon>
        <taxon>Bacillati</taxon>
        <taxon>Chloroflexota</taxon>
        <taxon>Chloroflexia</taxon>
        <taxon>Chloroflexales</taxon>
        <taxon>Chloroflexineae</taxon>
        <taxon>Chloroflexaceae</taxon>
        <taxon>Chloroflexus</taxon>
    </lineage>
</organism>
<feature type="signal peptide" evidence="1">
    <location>
        <begin position="1"/>
        <end position="56"/>
    </location>
</feature>
<feature type="propeptide" id="PRO_0000002846" evidence="4">
    <location>
        <begin position="57"/>
        <end position="80"/>
    </location>
</feature>
<feature type="chain" id="PRO_0000002847" description="Auracyanin-B-1">
    <location>
        <begin position="81"/>
        <end position="235"/>
    </location>
</feature>
<feature type="chain" id="PRO_0000002848" description="Auracyanin-B-2">
    <location>
        <begin position="89"/>
        <end position="235"/>
    </location>
</feature>
<feature type="domain" description="Plastocyanin-like">
    <location>
        <begin position="111"/>
        <end position="235"/>
    </location>
</feature>
<feature type="region of interest" description="Disordered" evidence="2">
    <location>
        <begin position="1"/>
        <end position="27"/>
    </location>
</feature>
<feature type="region of interest" description="Disordered" evidence="2">
    <location>
        <begin position="64"/>
        <end position="107"/>
    </location>
</feature>
<feature type="compositionally biased region" description="Low complexity" evidence="2">
    <location>
        <begin position="1"/>
        <end position="21"/>
    </location>
</feature>
<feature type="compositionally biased region" description="Pro residues" evidence="2">
    <location>
        <begin position="69"/>
        <end position="86"/>
    </location>
</feature>
<feature type="compositionally biased region" description="Low complexity" evidence="2">
    <location>
        <begin position="87"/>
        <end position="100"/>
    </location>
</feature>
<feature type="binding site">
    <location>
        <position position="152"/>
    </location>
    <ligand>
        <name>Cu cation</name>
        <dbReference type="ChEBI" id="CHEBI:23378"/>
    </ligand>
</feature>
<feature type="binding site">
    <location>
        <position position="217"/>
    </location>
    <ligand>
        <name>Cu cation</name>
        <dbReference type="ChEBI" id="CHEBI:23378"/>
    </ligand>
</feature>
<feature type="binding site">
    <location>
        <position position="222"/>
    </location>
    <ligand>
        <name>Cu cation</name>
        <dbReference type="ChEBI" id="CHEBI:23378"/>
    </ligand>
</feature>
<feature type="binding site">
    <location>
        <position position="227"/>
    </location>
    <ligand>
        <name>Cu cation</name>
        <dbReference type="ChEBI" id="CHEBI:23378"/>
    </ligand>
</feature>
<feature type="sequence conflict" description="In Ref. 3; AA sequence." evidence="8" ref="3">
    <original>P</original>
    <variation>G</variation>
    <location>
        <position position="183"/>
    </location>
</feature>
<feature type="sequence conflict" description="In Ref. 3; AA sequence." evidence="8" ref="3">
    <original>P</original>
    <variation>A</variation>
    <location>
        <position position="186"/>
    </location>
</feature>
<feature type="sequence conflict" description="In Ref. 3; AA sequence." evidence="8" ref="3">
    <original>F</original>
    <variation>G</variation>
    <location>
        <position position="219"/>
    </location>
</feature>
<feature type="sequence conflict" description="In Ref. 3; AA sequence." evidence="8" ref="3">
    <original>YLAG</original>
    <variation>TPI</variation>
    <location>
        <begin position="223"/>
        <end position="226"/>
    </location>
</feature>
<feature type="strand" evidence="10">
    <location>
        <begin position="111"/>
        <end position="118"/>
    </location>
</feature>
<feature type="strand" evidence="10">
    <location>
        <begin position="120"/>
        <end position="126"/>
    </location>
</feature>
<feature type="strand" evidence="10">
    <location>
        <begin position="128"/>
        <end position="133"/>
    </location>
</feature>
<feature type="strand" evidence="10">
    <location>
        <begin position="137"/>
        <end position="144"/>
    </location>
</feature>
<feature type="strand" evidence="10">
    <location>
        <begin position="155"/>
        <end position="160"/>
    </location>
</feature>
<feature type="helix" evidence="10">
    <location>
        <begin position="161"/>
        <end position="172"/>
    </location>
</feature>
<feature type="helix" evidence="10">
    <location>
        <begin position="175"/>
        <end position="177"/>
    </location>
</feature>
<feature type="strand" evidence="10">
    <location>
        <begin position="188"/>
        <end position="191"/>
    </location>
</feature>
<feature type="strand" evidence="10">
    <location>
        <begin position="199"/>
        <end position="206"/>
    </location>
</feature>
<feature type="strand" evidence="10">
    <location>
        <begin position="209"/>
        <end position="216"/>
    </location>
</feature>
<feature type="turn" evidence="10">
    <location>
        <begin position="220"/>
        <end position="226"/>
    </location>
</feature>
<feature type="strand" evidence="10">
    <location>
        <begin position="228"/>
        <end position="234"/>
    </location>
</feature>
<comment type="function">
    <text evidence="4">Probably a soluble electron acceptor for the integral membrane protein electron transfer alternative complex III (ACIII).</text>
</comment>
<comment type="cofactor">
    <cofactor>
        <name>Cu cation</name>
        <dbReference type="ChEBI" id="CHEBI:23378"/>
    </cofactor>
    <text>Binds 1 copper ion per subunit.</text>
</comment>
<comment type="biophysicochemical properties">
    <redoxPotential>
        <text evidence="3">E(0) is +190 mV at pH 9, +215 mV at pH 7 and +240 mV at pH 4.</text>
    </redoxPotential>
</comment>
<comment type="subcellular location">
    <subcellularLocation>
        <location evidence="9">Cell membrane</location>
        <topology evidence="9">Peripheral membrane protein</topology>
    </subcellularLocation>
    <text>Possibly located on the extracellular face of the cell membrane.</text>
</comment>
<comment type="induction">
    <text evidence="5 6 7">Present in both photosynthetically (anaerobically) and dark (aerobic respiration) grown cells (at protein level) (PubMed:19190939). A later paper showed this protein to be present in both chemoheterotrophically (dark) and photoheterotrophically (light) grown cells, but with more protein present in light grown cells (PubMed:22249883). The second report is thought to be correct (PubMed:23357331).</text>
</comment>
<comment type="PTM">
    <text evidence="4">Glycosylated.</text>
</comment>
<comment type="similarity">
    <text evidence="8">Belongs to the multicopper oxidase family.</text>
</comment>